<sequence length="460" mass="53093">MGGKKKVHPKTRTAAFKASEPSEIVEAPHSFVIHRGLACPYITDLTLDFRRIMEPFTASNLREKRMNRIKDFVSLSSFFHVSHMGIFNKASTQLSFKVVRLPRGPSLTFKVHQFTLARDVISLSKKQMIDNDHFKHAPLVIMNNFSGDGKHLKLMATTFQNMFPSINLATVNIGTIRRCVLFSYNPDTKLVEMRHYSVQVVPVGLKRAVQKIVKGTVPNLGKCNEVVDFVTKDGYASESEAEDDEQSHVVLAQTLKSKGNLEDKKSSIKLHEIGPRLTMQLIKIEEGLLTGEVLYHDHVVKTEDEKETLRKLVEKKRKQKEQRKKEQAENRARNLKLKKDEKWAAKRAAEGRTDSDPEDDAEYYKEEVGEEPDEELFKMEAKSSRKRPSLGGGMKYKNKRAKLDTKDKNDKSERTDKYDRKDKFDRKDKKDKFDPKNRRAKFDPKNKRAKFDHRKSRKSK</sequence>
<evidence type="ECO:0000255" key="1"/>
<evidence type="ECO:0000255" key="2">
    <source>
        <dbReference type="PROSITE-ProRule" id="PRU00034"/>
    </source>
</evidence>
<evidence type="ECO:0000256" key="3">
    <source>
        <dbReference type="SAM" id="MobiDB-lite"/>
    </source>
</evidence>
<evidence type="ECO:0000269" key="4">
    <source>
    </source>
</evidence>
<evidence type="ECO:0000269" key="5">
    <source>
    </source>
</evidence>
<evidence type="ECO:0000269" key="6">
    <source>
    </source>
</evidence>
<evidence type="ECO:0000305" key="7"/>
<dbReference type="EMBL" id="AF102805">
    <property type="protein sequence ID" value="AAD16459.1"/>
    <property type="molecule type" value="mRNA"/>
</dbReference>
<dbReference type="EMBL" id="AE014297">
    <property type="protein sequence ID" value="AAF55851.1"/>
    <property type="molecule type" value="Genomic_DNA"/>
</dbReference>
<dbReference type="RefSeq" id="NP_476979.1">
    <property type="nucleotide sequence ID" value="NM_057631.6"/>
</dbReference>
<dbReference type="SMR" id="Q9VDE5"/>
<dbReference type="BioGRID" id="67473">
    <property type="interactions" value="4"/>
</dbReference>
<dbReference type="FunCoup" id="Q9VDE5">
    <property type="interactions" value="1143"/>
</dbReference>
<dbReference type="IntAct" id="Q9VDE5">
    <property type="interactions" value="58"/>
</dbReference>
<dbReference type="STRING" id="7227.FBpp0083415"/>
<dbReference type="iPTMnet" id="Q9VDE5"/>
<dbReference type="PaxDb" id="7227-FBpp0083415"/>
<dbReference type="EnsemblMetazoa" id="FBtr0084012">
    <property type="protein sequence ID" value="FBpp0083415"/>
    <property type="gene ID" value="FBgn0010770"/>
</dbReference>
<dbReference type="GeneID" id="42502"/>
<dbReference type="KEGG" id="dme:Dmel_CG5786"/>
<dbReference type="AGR" id="FB:FBgn0010770"/>
<dbReference type="CTD" id="56342"/>
<dbReference type="FlyBase" id="FBgn0010770">
    <property type="gene designation" value="ppan"/>
</dbReference>
<dbReference type="VEuPathDB" id="VectorBase:FBgn0010770"/>
<dbReference type="eggNOG" id="KOG2963">
    <property type="taxonomic scope" value="Eukaryota"/>
</dbReference>
<dbReference type="GeneTree" id="ENSGT00530000064158"/>
<dbReference type="HOGENOM" id="CLU_026936_0_0_1"/>
<dbReference type="InParanoid" id="Q9VDE5"/>
<dbReference type="OMA" id="KDYTVMT"/>
<dbReference type="OrthoDB" id="10261452at2759"/>
<dbReference type="PhylomeDB" id="Q9VDE5"/>
<dbReference type="BioGRID-ORCS" id="42502">
    <property type="hits" value="1 hit in 3 CRISPR screens"/>
</dbReference>
<dbReference type="ChiTaRS" id="ppan">
    <property type="organism name" value="fly"/>
</dbReference>
<dbReference type="GenomeRNAi" id="42502"/>
<dbReference type="PRO" id="PR:Q9VDE5"/>
<dbReference type="Proteomes" id="UP000000803">
    <property type="component" value="Chromosome 3R"/>
</dbReference>
<dbReference type="Bgee" id="FBgn0010770">
    <property type="expression patterns" value="Expressed in adult enteroendocrine precursor cell in adult midgut (Drosophila) and 56 other cell types or tissues"/>
</dbReference>
<dbReference type="ExpressionAtlas" id="Q9VDE5">
    <property type="expression patterns" value="baseline and differential"/>
</dbReference>
<dbReference type="GO" id="GO:0030687">
    <property type="term" value="C:preribosome, large subunit precursor"/>
    <property type="evidence" value="ECO:0000318"/>
    <property type="project" value="GO_Central"/>
</dbReference>
<dbReference type="GO" id="GO:0019843">
    <property type="term" value="F:rRNA binding"/>
    <property type="evidence" value="ECO:0000318"/>
    <property type="project" value="GO_Central"/>
</dbReference>
<dbReference type="GO" id="GO:0007292">
    <property type="term" value="P:female gamete generation"/>
    <property type="evidence" value="ECO:0000315"/>
    <property type="project" value="UniProtKB"/>
</dbReference>
<dbReference type="GO" id="GO:0007444">
    <property type="term" value="P:imaginal disc development"/>
    <property type="evidence" value="ECO:0000315"/>
    <property type="project" value="UniProtKB"/>
</dbReference>
<dbReference type="GO" id="GO:0002164">
    <property type="term" value="P:larval development"/>
    <property type="evidence" value="ECO:0000315"/>
    <property type="project" value="UniProtKB"/>
</dbReference>
<dbReference type="GO" id="GO:0000463">
    <property type="term" value="P:maturation of LSU-rRNA from tricistronic rRNA transcript (SSU-rRNA, 5.8S rRNA, LSU-rRNA)"/>
    <property type="evidence" value="ECO:0000318"/>
    <property type="project" value="GO_Central"/>
</dbReference>
<dbReference type="GO" id="GO:0048477">
    <property type="term" value="P:oogenesis"/>
    <property type="evidence" value="ECO:0007669"/>
    <property type="project" value="UniProtKB-KW"/>
</dbReference>
<dbReference type="InterPro" id="IPR007109">
    <property type="entry name" value="Brix"/>
</dbReference>
<dbReference type="InterPro" id="IPR045112">
    <property type="entry name" value="PPAN-like"/>
</dbReference>
<dbReference type="PANTHER" id="PTHR12661">
    <property type="entry name" value="PETER PAN-RELATED"/>
    <property type="match status" value="1"/>
</dbReference>
<dbReference type="PANTHER" id="PTHR12661:SF5">
    <property type="entry name" value="SUPPRESSOR OF SWI4 1 HOMOLOG"/>
    <property type="match status" value="1"/>
</dbReference>
<dbReference type="Pfam" id="PF04427">
    <property type="entry name" value="Brix"/>
    <property type="match status" value="1"/>
</dbReference>
<dbReference type="SMART" id="SM00879">
    <property type="entry name" value="Brix"/>
    <property type="match status" value="1"/>
</dbReference>
<dbReference type="PROSITE" id="PS50833">
    <property type="entry name" value="BRIX"/>
    <property type="match status" value="1"/>
</dbReference>
<accession>Q9VDE5</accession>
<accession>O97133</accession>
<organism>
    <name type="scientific">Drosophila melanogaster</name>
    <name type="common">Fruit fly</name>
    <dbReference type="NCBI Taxonomy" id="7227"/>
    <lineage>
        <taxon>Eukaryota</taxon>
        <taxon>Metazoa</taxon>
        <taxon>Ecdysozoa</taxon>
        <taxon>Arthropoda</taxon>
        <taxon>Hexapoda</taxon>
        <taxon>Insecta</taxon>
        <taxon>Pterygota</taxon>
        <taxon>Neoptera</taxon>
        <taxon>Endopterygota</taxon>
        <taxon>Diptera</taxon>
        <taxon>Brachycera</taxon>
        <taxon>Muscomorpha</taxon>
        <taxon>Ephydroidea</taxon>
        <taxon>Drosophilidae</taxon>
        <taxon>Drosophila</taxon>
        <taxon>Sophophora</taxon>
    </lineage>
</organism>
<name>PPAN_DROME</name>
<reference evidence="7" key="1">
    <citation type="journal article" date="1999" name="Mol. Biol. Cell">
        <title>Cloning and characterization of peter pan, a novel Drosophila gene required for larval growth.</title>
        <authorList>
            <person name="Migeon J.C."/>
            <person name="Garfinkel M.S."/>
            <person name="Edgar B.A."/>
        </authorList>
    </citation>
    <scope>NUCLEOTIDE SEQUENCE [MRNA]</scope>
    <scope>FUNCTION</scope>
</reference>
<reference evidence="7" key="2">
    <citation type="journal article" date="2000" name="Science">
        <title>The genome sequence of Drosophila melanogaster.</title>
        <authorList>
            <person name="Adams M.D."/>
            <person name="Celniker S.E."/>
            <person name="Holt R.A."/>
            <person name="Evans C.A."/>
            <person name="Gocayne J.D."/>
            <person name="Amanatides P.G."/>
            <person name="Scherer S.E."/>
            <person name="Li P.W."/>
            <person name="Hoskins R.A."/>
            <person name="Galle R.F."/>
            <person name="George R.A."/>
            <person name="Lewis S.E."/>
            <person name="Richards S."/>
            <person name="Ashburner M."/>
            <person name="Henderson S.N."/>
            <person name="Sutton G.G."/>
            <person name="Wortman J.R."/>
            <person name="Yandell M.D."/>
            <person name="Zhang Q."/>
            <person name="Chen L.X."/>
            <person name="Brandon R.C."/>
            <person name="Rogers Y.-H.C."/>
            <person name="Blazej R.G."/>
            <person name="Champe M."/>
            <person name="Pfeiffer B.D."/>
            <person name="Wan K.H."/>
            <person name="Doyle C."/>
            <person name="Baxter E.G."/>
            <person name="Helt G."/>
            <person name="Nelson C.R."/>
            <person name="Miklos G.L.G."/>
            <person name="Abril J.F."/>
            <person name="Agbayani A."/>
            <person name="An H.-J."/>
            <person name="Andrews-Pfannkoch C."/>
            <person name="Baldwin D."/>
            <person name="Ballew R.M."/>
            <person name="Basu A."/>
            <person name="Baxendale J."/>
            <person name="Bayraktaroglu L."/>
            <person name="Beasley E.M."/>
            <person name="Beeson K.Y."/>
            <person name="Benos P.V."/>
            <person name="Berman B.P."/>
            <person name="Bhandari D."/>
            <person name="Bolshakov S."/>
            <person name="Borkova D."/>
            <person name="Botchan M.R."/>
            <person name="Bouck J."/>
            <person name="Brokstein P."/>
            <person name="Brottier P."/>
            <person name="Burtis K.C."/>
            <person name="Busam D.A."/>
            <person name="Butler H."/>
            <person name="Cadieu E."/>
            <person name="Center A."/>
            <person name="Chandra I."/>
            <person name="Cherry J.M."/>
            <person name="Cawley S."/>
            <person name="Dahlke C."/>
            <person name="Davenport L.B."/>
            <person name="Davies P."/>
            <person name="de Pablos B."/>
            <person name="Delcher A."/>
            <person name="Deng Z."/>
            <person name="Mays A.D."/>
            <person name="Dew I."/>
            <person name="Dietz S.M."/>
            <person name="Dodson K."/>
            <person name="Doup L.E."/>
            <person name="Downes M."/>
            <person name="Dugan-Rocha S."/>
            <person name="Dunkov B.C."/>
            <person name="Dunn P."/>
            <person name="Durbin K.J."/>
            <person name="Evangelista C.C."/>
            <person name="Ferraz C."/>
            <person name="Ferriera S."/>
            <person name="Fleischmann W."/>
            <person name="Fosler C."/>
            <person name="Gabrielian A.E."/>
            <person name="Garg N.S."/>
            <person name="Gelbart W.M."/>
            <person name="Glasser K."/>
            <person name="Glodek A."/>
            <person name="Gong F."/>
            <person name="Gorrell J.H."/>
            <person name="Gu Z."/>
            <person name="Guan P."/>
            <person name="Harris M."/>
            <person name="Harris N.L."/>
            <person name="Harvey D.A."/>
            <person name="Heiman T.J."/>
            <person name="Hernandez J.R."/>
            <person name="Houck J."/>
            <person name="Hostin D."/>
            <person name="Houston K.A."/>
            <person name="Howland T.J."/>
            <person name="Wei M.-H."/>
            <person name="Ibegwam C."/>
            <person name="Jalali M."/>
            <person name="Kalush F."/>
            <person name="Karpen G.H."/>
            <person name="Ke Z."/>
            <person name="Kennison J.A."/>
            <person name="Ketchum K.A."/>
            <person name="Kimmel B.E."/>
            <person name="Kodira C.D."/>
            <person name="Kraft C.L."/>
            <person name="Kravitz S."/>
            <person name="Kulp D."/>
            <person name="Lai Z."/>
            <person name="Lasko P."/>
            <person name="Lei Y."/>
            <person name="Levitsky A.A."/>
            <person name="Li J.H."/>
            <person name="Li Z."/>
            <person name="Liang Y."/>
            <person name="Lin X."/>
            <person name="Liu X."/>
            <person name="Mattei B."/>
            <person name="McIntosh T.C."/>
            <person name="McLeod M.P."/>
            <person name="McPherson D."/>
            <person name="Merkulov G."/>
            <person name="Milshina N.V."/>
            <person name="Mobarry C."/>
            <person name="Morris J."/>
            <person name="Moshrefi A."/>
            <person name="Mount S.M."/>
            <person name="Moy M."/>
            <person name="Murphy B."/>
            <person name="Murphy L."/>
            <person name="Muzny D.M."/>
            <person name="Nelson D.L."/>
            <person name="Nelson D.R."/>
            <person name="Nelson K.A."/>
            <person name="Nixon K."/>
            <person name="Nusskern D.R."/>
            <person name="Pacleb J.M."/>
            <person name="Palazzolo M."/>
            <person name="Pittman G.S."/>
            <person name="Pan S."/>
            <person name="Pollard J."/>
            <person name="Puri V."/>
            <person name="Reese M.G."/>
            <person name="Reinert K."/>
            <person name="Remington K."/>
            <person name="Saunders R.D.C."/>
            <person name="Scheeler F."/>
            <person name="Shen H."/>
            <person name="Shue B.C."/>
            <person name="Siden-Kiamos I."/>
            <person name="Simpson M."/>
            <person name="Skupski M.P."/>
            <person name="Smith T.J."/>
            <person name="Spier E."/>
            <person name="Spradling A.C."/>
            <person name="Stapleton M."/>
            <person name="Strong R."/>
            <person name="Sun E."/>
            <person name="Svirskas R."/>
            <person name="Tector C."/>
            <person name="Turner R."/>
            <person name="Venter E."/>
            <person name="Wang A.H."/>
            <person name="Wang X."/>
            <person name="Wang Z.-Y."/>
            <person name="Wassarman D.A."/>
            <person name="Weinstock G.M."/>
            <person name="Weissenbach J."/>
            <person name="Williams S.M."/>
            <person name="Woodage T."/>
            <person name="Worley K.C."/>
            <person name="Wu D."/>
            <person name="Yang S."/>
            <person name="Yao Q.A."/>
            <person name="Ye J."/>
            <person name="Yeh R.-F."/>
            <person name="Zaveri J.S."/>
            <person name="Zhan M."/>
            <person name="Zhang G."/>
            <person name="Zhao Q."/>
            <person name="Zheng L."/>
            <person name="Zheng X.H."/>
            <person name="Zhong F.N."/>
            <person name="Zhong W."/>
            <person name="Zhou X."/>
            <person name="Zhu S.C."/>
            <person name="Zhu X."/>
            <person name="Smith H.O."/>
            <person name="Gibbs R.A."/>
            <person name="Myers E.W."/>
            <person name="Rubin G.M."/>
            <person name="Venter J.C."/>
        </authorList>
    </citation>
    <scope>NUCLEOTIDE SEQUENCE [LARGE SCALE GENOMIC DNA]</scope>
    <source>
        <strain>Berkeley</strain>
    </source>
</reference>
<reference key="3">
    <citation type="journal article" date="2002" name="Genome Biol.">
        <title>Annotation of the Drosophila melanogaster euchromatic genome: a systematic review.</title>
        <authorList>
            <person name="Misra S."/>
            <person name="Crosby M.A."/>
            <person name="Mungall C.J."/>
            <person name="Matthews B.B."/>
            <person name="Campbell K.S."/>
            <person name="Hradecky P."/>
            <person name="Huang Y."/>
            <person name="Kaminker J.S."/>
            <person name="Millburn G.H."/>
            <person name="Prochnik S.E."/>
            <person name="Smith C.D."/>
            <person name="Tupy J.L."/>
            <person name="Whitfield E.J."/>
            <person name="Bayraktaroglu L."/>
            <person name="Berman B.P."/>
            <person name="Bettencourt B.R."/>
            <person name="Celniker S.E."/>
            <person name="de Grey A.D.N.J."/>
            <person name="Drysdale R.A."/>
            <person name="Harris N.L."/>
            <person name="Richter J."/>
            <person name="Russo S."/>
            <person name="Schroeder A.J."/>
            <person name="Shu S.Q."/>
            <person name="Stapleton M."/>
            <person name="Yamada C."/>
            <person name="Ashburner M."/>
            <person name="Gelbart W.M."/>
            <person name="Rubin G.M."/>
            <person name="Lewis S.E."/>
        </authorList>
    </citation>
    <scope>GENOME REANNOTATION</scope>
    <source>
        <strain>Berkeley</strain>
    </source>
</reference>
<reference key="4">
    <citation type="journal article" date="2007" name="Mol. Biosyst.">
        <title>An integrated chemical, mass spectrometric and computational strategy for (quantitative) phosphoproteomics: application to Drosophila melanogaster Kc167 cells.</title>
        <authorList>
            <person name="Bodenmiller B."/>
            <person name="Mueller L.N."/>
            <person name="Pedrioli P.G.A."/>
            <person name="Pflieger D."/>
            <person name="Juenger M.A."/>
            <person name="Eng J.K."/>
            <person name="Aebersold R."/>
            <person name="Tao W.A."/>
        </authorList>
    </citation>
    <scope>PHOSPHORYLATION [LARGE SCALE ANALYSIS] AT SER-355</scope>
    <scope>IDENTIFICATION BY MASS SPECTROMETRY</scope>
</reference>
<reference key="5">
    <citation type="journal article" date="2008" name="J. Proteome Res.">
        <title>Phosphoproteome analysis of Drosophila melanogaster embryos.</title>
        <authorList>
            <person name="Zhai B."/>
            <person name="Villen J."/>
            <person name="Beausoleil S.A."/>
            <person name="Mintseris J."/>
            <person name="Gygi S.P."/>
        </authorList>
    </citation>
    <scope>PHOSPHORYLATION [LARGE SCALE ANALYSIS] AT SER-237; SER-239; THR-353 AND SER-355</scope>
    <scope>IDENTIFICATION BY MASS SPECTROMETRY</scope>
    <source>
        <tissue>Embryo</tissue>
    </source>
</reference>
<proteinExistence type="evidence at protein level"/>
<protein>
    <recommendedName>
        <fullName>Protein Peter pan</fullName>
    </recommendedName>
</protein>
<feature type="chain" id="PRO_0000120246" description="Protein Peter pan">
    <location>
        <begin position="1"/>
        <end position="460"/>
    </location>
</feature>
<feature type="domain" description="Brix" evidence="2">
    <location>
        <begin position="28"/>
        <end position="290"/>
    </location>
</feature>
<feature type="region of interest" description="Disordered" evidence="3">
    <location>
        <begin position="315"/>
        <end position="460"/>
    </location>
</feature>
<feature type="coiled-coil region" evidence="1">
    <location>
        <begin position="295"/>
        <end position="350"/>
    </location>
</feature>
<feature type="compositionally biased region" description="Basic and acidic residues" evidence="3">
    <location>
        <begin position="323"/>
        <end position="355"/>
    </location>
</feature>
<feature type="compositionally biased region" description="Basic and acidic residues" evidence="3">
    <location>
        <begin position="401"/>
        <end position="446"/>
    </location>
</feature>
<feature type="compositionally biased region" description="Basic residues" evidence="3">
    <location>
        <begin position="447"/>
        <end position="460"/>
    </location>
</feature>
<feature type="modified residue" description="Phosphoserine" evidence="6">
    <location>
        <position position="237"/>
    </location>
</feature>
<feature type="modified residue" description="Phosphoserine" evidence="6">
    <location>
        <position position="239"/>
    </location>
</feature>
<feature type="modified residue" description="Phosphothreonine" evidence="6">
    <location>
        <position position="353"/>
    </location>
</feature>
<feature type="modified residue" description="Phosphoserine" evidence="5 6">
    <location>
        <position position="355"/>
    </location>
</feature>
<feature type="sequence conflict" description="In Ref. 1; AAD16459." evidence="7" ref="1">
    <original>K</original>
    <variation>Q</variation>
    <location>
        <position position="70"/>
    </location>
</feature>
<feature type="sequence conflict" description="In Ref. 1; AAD16459." evidence="7" ref="1">
    <original>S</original>
    <variation>C</variation>
    <location>
        <position position="74"/>
    </location>
</feature>
<feature type="sequence conflict" description="In Ref. 1; AAD16459." evidence="7" ref="1">
    <original>R</original>
    <variation>G</variation>
    <location>
        <position position="438"/>
    </location>
</feature>
<comment type="function">
    <text evidence="4">Required for initiation of larval growth and normal mitotic growth but is not absolutely required for general biosynthesis or DNA replication. Required for progression of normal oogenesis and maturation of some imaginal tissues into adult structures.</text>
</comment>
<comment type="tissue specificity">
    <text evidence="4">Ubiquitous.</text>
</comment>
<comment type="developmental stage">
    <text evidence="4">Expressed both maternally and zygotically, highest expression level is during embryogenesis.</text>
</comment>
<comment type="similarity">
    <text evidence="7">Belongs to the PPAN family.</text>
</comment>
<keyword id="KW-0175">Coiled coil</keyword>
<keyword id="KW-0217">Developmental protein</keyword>
<keyword id="KW-0221">Differentiation</keyword>
<keyword id="KW-0896">Oogenesis</keyword>
<keyword id="KW-0597">Phosphoprotein</keyword>
<keyword id="KW-1185">Reference proteome</keyword>
<gene>
    <name type="primary">ppan</name>
    <name type="ORF">CG5786</name>
</gene>